<evidence type="ECO:0000255" key="1">
    <source>
        <dbReference type="HAMAP-Rule" id="MF_00291"/>
    </source>
</evidence>
<evidence type="ECO:0000305" key="2"/>
<reference key="1">
    <citation type="journal article" date="2010" name="Environ. Microbiol.">
        <title>The genome of Syntrophomonas wolfei: new insights into syntrophic metabolism and biohydrogen production.</title>
        <authorList>
            <person name="Sieber J.R."/>
            <person name="Sims D.R."/>
            <person name="Han C."/>
            <person name="Kim E."/>
            <person name="Lykidis A."/>
            <person name="Lapidus A.L."/>
            <person name="McDonnald E."/>
            <person name="Rohlin L."/>
            <person name="Culley D.E."/>
            <person name="Gunsalus R."/>
            <person name="McInerney M.J."/>
        </authorList>
    </citation>
    <scope>NUCLEOTIDE SEQUENCE [LARGE SCALE GENOMIC DNA]</scope>
    <source>
        <strain>DSM 2245B / Goettingen</strain>
    </source>
</reference>
<dbReference type="EMBL" id="CP000448">
    <property type="protein sequence ID" value="ABI68200.1"/>
    <property type="status" value="ALT_INIT"/>
    <property type="molecule type" value="Genomic_DNA"/>
</dbReference>
<dbReference type="RefSeq" id="WP_041427783.1">
    <property type="nucleotide sequence ID" value="NC_008346.1"/>
</dbReference>
<dbReference type="SMR" id="Q0AYK4"/>
<dbReference type="STRING" id="335541.Swol_0882"/>
<dbReference type="KEGG" id="swo:Swol_0882"/>
<dbReference type="eggNOG" id="COG0052">
    <property type="taxonomic scope" value="Bacteria"/>
</dbReference>
<dbReference type="HOGENOM" id="CLU_040318_1_2_9"/>
<dbReference type="OrthoDB" id="9808036at2"/>
<dbReference type="Proteomes" id="UP000001968">
    <property type="component" value="Chromosome"/>
</dbReference>
<dbReference type="GO" id="GO:0022627">
    <property type="term" value="C:cytosolic small ribosomal subunit"/>
    <property type="evidence" value="ECO:0007669"/>
    <property type="project" value="TreeGrafter"/>
</dbReference>
<dbReference type="GO" id="GO:0003735">
    <property type="term" value="F:structural constituent of ribosome"/>
    <property type="evidence" value="ECO:0007669"/>
    <property type="project" value="InterPro"/>
</dbReference>
<dbReference type="GO" id="GO:0006412">
    <property type="term" value="P:translation"/>
    <property type="evidence" value="ECO:0007669"/>
    <property type="project" value="UniProtKB-UniRule"/>
</dbReference>
<dbReference type="CDD" id="cd01425">
    <property type="entry name" value="RPS2"/>
    <property type="match status" value="1"/>
</dbReference>
<dbReference type="FunFam" id="1.10.287.610:FF:000001">
    <property type="entry name" value="30S ribosomal protein S2"/>
    <property type="match status" value="1"/>
</dbReference>
<dbReference type="Gene3D" id="3.40.50.10490">
    <property type="entry name" value="Glucose-6-phosphate isomerase like protein, domain 1"/>
    <property type="match status" value="1"/>
</dbReference>
<dbReference type="Gene3D" id="1.10.287.610">
    <property type="entry name" value="Helix hairpin bin"/>
    <property type="match status" value="1"/>
</dbReference>
<dbReference type="HAMAP" id="MF_00291_B">
    <property type="entry name" value="Ribosomal_uS2_B"/>
    <property type="match status" value="1"/>
</dbReference>
<dbReference type="InterPro" id="IPR001865">
    <property type="entry name" value="Ribosomal_uS2"/>
</dbReference>
<dbReference type="InterPro" id="IPR005706">
    <property type="entry name" value="Ribosomal_uS2_bac/mit/plastid"/>
</dbReference>
<dbReference type="InterPro" id="IPR018130">
    <property type="entry name" value="Ribosomal_uS2_CS"/>
</dbReference>
<dbReference type="InterPro" id="IPR023591">
    <property type="entry name" value="Ribosomal_uS2_flav_dom_sf"/>
</dbReference>
<dbReference type="NCBIfam" id="TIGR01011">
    <property type="entry name" value="rpsB_bact"/>
    <property type="match status" value="1"/>
</dbReference>
<dbReference type="PANTHER" id="PTHR12534">
    <property type="entry name" value="30S RIBOSOMAL PROTEIN S2 PROKARYOTIC AND ORGANELLAR"/>
    <property type="match status" value="1"/>
</dbReference>
<dbReference type="PANTHER" id="PTHR12534:SF0">
    <property type="entry name" value="SMALL RIBOSOMAL SUBUNIT PROTEIN US2M"/>
    <property type="match status" value="1"/>
</dbReference>
<dbReference type="Pfam" id="PF00318">
    <property type="entry name" value="Ribosomal_S2"/>
    <property type="match status" value="1"/>
</dbReference>
<dbReference type="PRINTS" id="PR00395">
    <property type="entry name" value="RIBOSOMALS2"/>
</dbReference>
<dbReference type="SUPFAM" id="SSF52313">
    <property type="entry name" value="Ribosomal protein S2"/>
    <property type="match status" value="1"/>
</dbReference>
<dbReference type="PROSITE" id="PS00962">
    <property type="entry name" value="RIBOSOMAL_S2_1"/>
    <property type="match status" value="1"/>
</dbReference>
<dbReference type="PROSITE" id="PS00963">
    <property type="entry name" value="RIBOSOMAL_S2_2"/>
    <property type="match status" value="1"/>
</dbReference>
<keyword id="KW-1185">Reference proteome</keyword>
<keyword id="KW-0687">Ribonucleoprotein</keyword>
<keyword id="KW-0689">Ribosomal protein</keyword>
<name>RS2_SYNWW</name>
<organism>
    <name type="scientific">Syntrophomonas wolfei subsp. wolfei (strain DSM 2245B / Goettingen)</name>
    <dbReference type="NCBI Taxonomy" id="335541"/>
    <lineage>
        <taxon>Bacteria</taxon>
        <taxon>Bacillati</taxon>
        <taxon>Bacillota</taxon>
        <taxon>Clostridia</taxon>
        <taxon>Eubacteriales</taxon>
        <taxon>Syntrophomonadaceae</taxon>
        <taxon>Syntrophomonas</taxon>
    </lineage>
</organism>
<proteinExistence type="inferred from homology"/>
<accession>Q0AYK4</accession>
<protein>
    <recommendedName>
        <fullName evidence="1">Small ribosomal subunit protein uS2</fullName>
    </recommendedName>
    <alternativeName>
        <fullName evidence="2">30S ribosomal protein S2</fullName>
    </alternativeName>
</protein>
<feature type="chain" id="PRO_0000352045" description="Small ribosomal subunit protein uS2">
    <location>
        <begin position="1"/>
        <end position="232"/>
    </location>
</feature>
<sequence length="232" mass="26307">MSVVTMKQLLEAGVHFGHQTRRWNPKMATYIYMERNGIYIIDLQQTVKKFDAAYEFVKSVAAAGKGVLFVGTKKQAQETIREEASRCGMYFVNQRWLGGMLTNYKTIKRRVLRLKELEKQEAEGAFEVLSKKEVARLLNERERLERFLGGIKEMDKLPGAVFVVDPRKERIAVAEARKLNIPVVAIVDTNCDPDEIDYVIPGNDDAIRAVKLISSRIADAVLEGKQGEQITT</sequence>
<comment type="similarity">
    <text evidence="1">Belongs to the universal ribosomal protein uS2 family.</text>
</comment>
<comment type="sequence caution" evidence="2">
    <conflict type="erroneous initiation">
        <sequence resource="EMBL-CDS" id="ABI68200"/>
    </conflict>
</comment>
<gene>
    <name evidence="1" type="primary">rpsB</name>
    <name type="ordered locus">Swol_0882</name>
</gene>